<organism>
    <name type="scientific">Welwitschia mirabilis</name>
    <name type="common">Tree tumbo</name>
    <name type="synonym">Welwitschia bainesii</name>
    <dbReference type="NCBI Taxonomy" id="3377"/>
    <lineage>
        <taxon>Eukaryota</taxon>
        <taxon>Viridiplantae</taxon>
        <taxon>Streptophyta</taxon>
        <taxon>Embryophyta</taxon>
        <taxon>Tracheophyta</taxon>
        <taxon>Spermatophyta</taxon>
        <taxon>Gnetopsida</taxon>
        <taxon>Gnetidae</taxon>
        <taxon>Welwitschiales</taxon>
        <taxon>Welwitschiaceae</taxon>
        <taxon>Welwitschia</taxon>
    </lineage>
</organism>
<feature type="chain" id="PRO_0000353244" description="Photosystem II reaction center protein I">
    <location>
        <begin position="1"/>
        <end position="38"/>
    </location>
</feature>
<feature type="transmembrane region" description="Helical" evidence="1">
    <location>
        <begin position="4"/>
        <end position="24"/>
    </location>
</feature>
<evidence type="ECO:0000255" key="1">
    <source>
        <dbReference type="HAMAP-Rule" id="MF_01316"/>
    </source>
</evidence>
<comment type="function">
    <text evidence="1">One of the components of the core complex of photosystem II (PSII), required for its stability and/or assembly. PSII is a light-driven water:plastoquinone oxidoreductase that uses light energy to abstract electrons from H(2)O, generating O(2) and a proton gradient subsequently used for ATP formation. It consists of a core antenna complex that captures photons, and an electron transfer chain that converts photonic excitation into a charge separation.</text>
</comment>
<comment type="subunit">
    <text evidence="1">PSII is composed of 1 copy each of membrane proteins PsbA, PsbB, PsbC, PsbD, PsbE, PsbF, PsbH, PsbI, PsbJ, PsbK, PsbL, PsbM, PsbT, PsbX, PsbY, PsbZ, Psb30/Ycf12, at least 3 peripheral proteins of the oxygen-evolving complex and a large number of cofactors. It forms dimeric complexes.</text>
</comment>
<comment type="subcellular location">
    <subcellularLocation>
        <location evidence="1">Plastid</location>
        <location evidence="1">Chloroplast thylakoid membrane</location>
        <topology evidence="1">Single-pass membrane protein</topology>
    </subcellularLocation>
</comment>
<comment type="similarity">
    <text evidence="1">Belongs to the PsbI family.</text>
</comment>
<keyword id="KW-0150">Chloroplast</keyword>
<keyword id="KW-0472">Membrane</keyword>
<keyword id="KW-0602">Photosynthesis</keyword>
<keyword id="KW-0604">Photosystem II</keyword>
<keyword id="KW-0934">Plastid</keyword>
<keyword id="KW-0674">Reaction center</keyword>
<keyword id="KW-0793">Thylakoid</keyword>
<keyword id="KW-0812">Transmembrane</keyword>
<keyword id="KW-1133">Transmembrane helix</keyword>
<accession>B2Y1W4</accession>
<accession>B7ZI44</accession>
<protein>
    <recommendedName>
        <fullName evidence="1">Photosystem II reaction center protein I</fullName>
        <shortName evidence="1">PSII-I</shortName>
    </recommendedName>
    <alternativeName>
        <fullName evidence="1">PSII 4.8 kDa protein</fullName>
    </alternativeName>
</protein>
<sequence length="38" mass="4341">MLTLKVFVYTVVTFFISLFLFGFLSNDPGRNPGRKEEG</sequence>
<gene>
    <name evidence="1" type="primary">psbI</name>
</gene>
<reference key="1">
    <citation type="journal article" date="2008" name="BMC Evol. Biol.">
        <title>The complete plastid genome sequence of Welwitschia mirabilis: an unusually compact plastome with accelerated divergence rates.</title>
        <authorList>
            <person name="McCoy S.R."/>
            <person name="Kuehl J.V."/>
            <person name="Boore J.L."/>
            <person name="Raubeson L.A."/>
        </authorList>
    </citation>
    <scope>NUCLEOTIDE SEQUENCE [LARGE SCALE GENOMIC DNA]</scope>
</reference>
<reference key="2">
    <citation type="journal article" date="2009" name="Mol. Phylogenet. Evol.">
        <title>Evolution of reduced and compact chloroplast genomes (cpDNAs) in gnetophytes: Selection toward a lower-cost strategy.</title>
        <authorList>
            <person name="Wu C.-S."/>
            <person name="Lai Y.-T."/>
            <person name="Lin C.-P."/>
            <person name="Wang Y.-N."/>
            <person name="Chaw S.-M."/>
        </authorList>
    </citation>
    <scope>NUCLEOTIDE SEQUENCE [LARGE SCALE GENOMIC DNA]</scope>
</reference>
<geneLocation type="chloroplast"/>
<proteinExistence type="inferred from homology"/>
<name>PSBI_WELMI</name>
<dbReference type="EMBL" id="EU342371">
    <property type="protein sequence ID" value="ABY26794.1"/>
    <property type="molecule type" value="Genomic_DNA"/>
</dbReference>
<dbReference type="EMBL" id="AP009568">
    <property type="protein sequence ID" value="BAH11224.1"/>
    <property type="molecule type" value="Genomic_DNA"/>
</dbReference>
<dbReference type="RefSeq" id="YP_001876581.1">
    <property type="nucleotide sequence ID" value="NC_010654.1"/>
</dbReference>
<dbReference type="SMR" id="B2Y1W4"/>
<dbReference type="GeneID" id="6276268"/>
<dbReference type="GO" id="GO:0009535">
    <property type="term" value="C:chloroplast thylakoid membrane"/>
    <property type="evidence" value="ECO:0007669"/>
    <property type="project" value="UniProtKB-SubCell"/>
</dbReference>
<dbReference type="GO" id="GO:0009539">
    <property type="term" value="C:photosystem II reaction center"/>
    <property type="evidence" value="ECO:0007669"/>
    <property type="project" value="InterPro"/>
</dbReference>
<dbReference type="GO" id="GO:0015979">
    <property type="term" value="P:photosynthesis"/>
    <property type="evidence" value="ECO:0007669"/>
    <property type="project" value="UniProtKB-UniRule"/>
</dbReference>
<dbReference type="HAMAP" id="MF_01316">
    <property type="entry name" value="PSII_PsbI"/>
    <property type="match status" value="1"/>
</dbReference>
<dbReference type="InterPro" id="IPR003686">
    <property type="entry name" value="PSII_PsbI"/>
</dbReference>
<dbReference type="InterPro" id="IPR037271">
    <property type="entry name" value="PSII_PsbI_sf"/>
</dbReference>
<dbReference type="NCBIfam" id="NF002735">
    <property type="entry name" value="PRK02655.1"/>
    <property type="match status" value="1"/>
</dbReference>
<dbReference type="PANTHER" id="PTHR35772">
    <property type="entry name" value="PHOTOSYSTEM II REACTION CENTER PROTEIN I"/>
    <property type="match status" value="1"/>
</dbReference>
<dbReference type="PANTHER" id="PTHR35772:SF1">
    <property type="entry name" value="PHOTOSYSTEM II REACTION CENTER PROTEIN I"/>
    <property type="match status" value="1"/>
</dbReference>
<dbReference type="Pfam" id="PF02532">
    <property type="entry name" value="PsbI"/>
    <property type="match status" value="1"/>
</dbReference>
<dbReference type="SUPFAM" id="SSF161041">
    <property type="entry name" value="Photosystem II reaction center protein I, PsbI"/>
    <property type="match status" value="1"/>
</dbReference>